<protein>
    <recommendedName>
        <fullName evidence="1">Phosphoenolpyruvate carboxykinase (ATP)</fullName>
        <shortName evidence="1">PCK</shortName>
        <shortName evidence="1">PEP carboxykinase</shortName>
        <shortName evidence="1">PEPCK</shortName>
        <ecNumber evidence="1">4.1.1.49</ecNumber>
    </recommendedName>
</protein>
<comment type="function">
    <text evidence="1">Involved in the gluconeogenesis. Catalyzes the conversion of oxaloacetate (OAA) to phosphoenolpyruvate (PEP) through direct phosphoryl transfer between the nucleoside triphosphate and OAA.</text>
</comment>
<comment type="catalytic activity">
    <reaction evidence="1">
        <text>oxaloacetate + ATP = phosphoenolpyruvate + ADP + CO2</text>
        <dbReference type="Rhea" id="RHEA:18617"/>
        <dbReference type="ChEBI" id="CHEBI:16452"/>
        <dbReference type="ChEBI" id="CHEBI:16526"/>
        <dbReference type="ChEBI" id="CHEBI:30616"/>
        <dbReference type="ChEBI" id="CHEBI:58702"/>
        <dbReference type="ChEBI" id="CHEBI:456216"/>
        <dbReference type="EC" id="4.1.1.49"/>
    </reaction>
</comment>
<comment type="cofactor">
    <cofactor evidence="1">
        <name>Mn(2+)</name>
        <dbReference type="ChEBI" id="CHEBI:29035"/>
    </cofactor>
    <text evidence="1">Binds 1 Mn(2+) ion per subunit.</text>
</comment>
<comment type="pathway">
    <text evidence="1">Carbohydrate biosynthesis; gluconeogenesis.</text>
</comment>
<comment type="subcellular location">
    <subcellularLocation>
        <location evidence="1">Cytoplasm</location>
    </subcellularLocation>
</comment>
<comment type="similarity">
    <text evidence="1">Belongs to the phosphoenolpyruvate carboxykinase (ATP) family.</text>
</comment>
<organism>
    <name type="scientific">Bradyrhizobium sp. (strain BTAi1 / ATCC BAA-1182)</name>
    <dbReference type="NCBI Taxonomy" id="288000"/>
    <lineage>
        <taxon>Bacteria</taxon>
        <taxon>Pseudomonadati</taxon>
        <taxon>Pseudomonadota</taxon>
        <taxon>Alphaproteobacteria</taxon>
        <taxon>Hyphomicrobiales</taxon>
        <taxon>Nitrobacteraceae</taxon>
        <taxon>Bradyrhizobium</taxon>
    </lineage>
</organism>
<name>PCKA_BRASB</name>
<keyword id="KW-0067">ATP-binding</keyword>
<keyword id="KW-0963">Cytoplasm</keyword>
<keyword id="KW-0210">Decarboxylase</keyword>
<keyword id="KW-0312">Gluconeogenesis</keyword>
<keyword id="KW-0456">Lyase</keyword>
<keyword id="KW-0464">Manganese</keyword>
<keyword id="KW-0479">Metal-binding</keyword>
<keyword id="KW-0547">Nucleotide-binding</keyword>
<keyword id="KW-1185">Reference proteome</keyword>
<reference key="1">
    <citation type="journal article" date="2007" name="Science">
        <title>Legumes symbioses: absence of nod genes in photosynthetic bradyrhizobia.</title>
        <authorList>
            <person name="Giraud E."/>
            <person name="Moulin L."/>
            <person name="Vallenet D."/>
            <person name="Barbe V."/>
            <person name="Cytryn E."/>
            <person name="Avarre J.-C."/>
            <person name="Jaubert M."/>
            <person name="Simon D."/>
            <person name="Cartieaux F."/>
            <person name="Prin Y."/>
            <person name="Bena G."/>
            <person name="Hannibal L."/>
            <person name="Fardoux J."/>
            <person name="Kojadinovic M."/>
            <person name="Vuillet L."/>
            <person name="Lajus A."/>
            <person name="Cruveiller S."/>
            <person name="Rouy Z."/>
            <person name="Mangenot S."/>
            <person name="Segurens B."/>
            <person name="Dossat C."/>
            <person name="Franck W.L."/>
            <person name="Chang W.-S."/>
            <person name="Saunders E."/>
            <person name="Bruce D."/>
            <person name="Richardson P."/>
            <person name="Normand P."/>
            <person name="Dreyfus B."/>
            <person name="Pignol D."/>
            <person name="Stacey G."/>
            <person name="Emerich D."/>
            <person name="Vermeglio A."/>
            <person name="Medigue C."/>
            <person name="Sadowsky M."/>
        </authorList>
    </citation>
    <scope>NUCLEOTIDE SEQUENCE [LARGE SCALE GENOMIC DNA]</scope>
    <source>
        <strain>BTAi1 / ATCC BAA-1182</strain>
    </source>
</reference>
<feature type="chain" id="PRO_1000026317" description="Phosphoenolpyruvate carboxykinase (ATP)">
    <location>
        <begin position="1"/>
        <end position="537"/>
    </location>
</feature>
<feature type="binding site" evidence="1">
    <location>
        <position position="61"/>
    </location>
    <ligand>
        <name>substrate</name>
    </ligand>
</feature>
<feature type="binding site" evidence="1">
    <location>
        <position position="194"/>
    </location>
    <ligand>
        <name>substrate</name>
    </ligand>
</feature>
<feature type="binding site" evidence="1">
    <location>
        <position position="200"/>
    </location>
    <ligand>
        <name>ATP</name>
        <dbReference type="ChEBI" id="CHEBI:30616"/>
    </ligand>
</feature>
<feature type="binding site" evidence="1">
    <location>
        <position position="200"/>
    </location>
    <ligand>
        <name>Mn(2+)</name>
        <dbReference type="ChEBI" id="CHEBI:29035"/>
    </ligand>
</feature>
<feature type="binding site" evidence="1">
    <location>
        <position position="200"/>
    </location>
    <ligand>
        <name>substrate</name>
    </ligand>
</feature>
<feature type="binding site" evidence="1">
    <location>
        <position position="219"/>
    </location>
    <ligand>
        <name>ATP</name>
        <dbReference type="ChEBI" id="CHEBI:30616"/>
    </ligand>
</feature>
<feature type="binding site" evidence="1">
    <location>
        <position position="219"/>
    </location>
    <ligand>
        <name>Mn(2+)</name>
        <dbReference type="ChEBI" id="CHEBI:29035"/>
    </ligand>
</feature>
<feature type="binding site" evidence="1">
    <location>
        <begin position="235"/>
        <end position="243"/>
    </location>
    <ligand>
        <name>ATP</name>
        <dbReference type="ChEBI" id="CHEBI:30616"/>
    </ligand>
</feature>
<feature type="binding site" evidence="1">
    <location>
        <position position="256"/>
    </location>
    <ligand>
        <name>Mn(2+)</name>
        <dbReference type="ChEBI" id="CHEBI:29035"/>
    </ligand>
</feature>
<feature type="binding site" evidence="1">
    <location>
        <position position="284"/>
    </location>
    <ligand>
        <name>ATP</name>
        <dbReference type="ChEBI" id="CHEBI:30616"/>
    </ligand>
</feature>
<feature type="binding site" evidence="1">
    <location>
        <position position="322"/>
    </location>
    <ligand>
        <name>ATP</name>
        <dbReference type="ChEBI" id="CHEBI:30616"/>
    </ligand>
</feature>
<feature type="binding site" evidence="1">
    <location>
        <position position="322"/>
    </location>
    <ligand>
        <name>substrate</name>
    </ligand>
</feature>
<feature type="binding site" evidence="1">
    <location>
        <position position="448"/>
    </location>
    <ligand>
        <name>ATP</name>
        <dbReference type="ChEBI" id="CHEBI:30616"/>
    </ligand>
</feature>
<accession>A5EST5</accession>
<sequence>MQETGIRNGAFGADKFGLKNLKQVHWNLGAPQLYQYSLAAGEAVLSANGALCADTGEFTGRSPKDKFTVRDASTEKMWWAGNQSITAEQFEALYQDFLKHAEGKTLFAQDLYGGADPTFRIKTRVFTELAWHSLFIRTLLIRPEKIELDTFVPELTIIDMPSFRADPKRHGVRSQNVVAIDFARKIVLIGGSYYAGEMKKSVFTTLNYYLPERGVMPMHCSANVGPKGDTAIFFGLSGTGKTTLSADPNRTLIGDDEHGWGPSGVFNFEGGCYAKCIKLSQEAEPQIFAASNRFGAVLENVVLDEDSRVPDFDDGSKTENTRSAYPLDYIPNASRTGRAPHPKNVVMLAADAFGVLPPIAKLSPAQAMYHFLSGYTAKVAGTERGLGNEPQPEFSTCFGSPFLPLDPSVYGNMLRQLIAEHNVDCWLVNTGWTGGKYGTGSRMPIKVTRALLTAALDGSLRNVEFRTDKYFGFAVPTALPGVPSEILDPVNTWADKAEFDKTARALVGMFQKNFAKFEAQVDADVRAAAPDVKLAAE</sequence>
<gene>
    <name evidence="1" type="primary">pckA</name>
    <name type="ordered locus">BBta_7365</name>
</gene>
<proteinExistence type="inferred from homology"/>
<evidence type="ECO:0000255" key="1">
    <source>
        <dbReference type="HAMAP-Rule" id="MF_00453"/>
    </source>
</evidence>
<dbReference type="EC" id="4.1.1.49" evidence="1"/>
<dbReference type="EMBL" id="CP000494">
    <property type="protein sequence ID" value="ABQ39229.1"/>
    <property type="molecule type" value="Genomic_DNA"/>
</dbReference>
<dbReference type="RefSeq" id="WP_012047132.1">
    <property type="nucleotide sequence ID" value="NC_009485.1"/>
</dbReference>
<dbReference type="SMR" id="A5EST5"/>
<dbReference type="STRING" id="288000.BBta_7365"/>
<dbReference type="KEGG" id="bbt:BBta_7365"/>
<dbReference type="eggNOG" id="COG1866">
    <property type="taxonomic scope" value="Bacteria"/>
</dbReference>
<dbReference type="HOGENOM" id="CLU_018247_0_1_5"/>
<dbReference type="OrthoDB" id="9806325at2"/>
<dbReference type="UniPathway" id="UPA00138"/>
<dbReference type="Proteomes" id="UP000000246">
    <property type="component" value="Chromosome"/>
</dbReference>
<dbReference type="GO" id="GO:0005829">
    <property type="term" value="C:cytosol"/>
    <property type="evidence" value="ECO:0007669"/>
    <property type="project" value="TreeGrafter"/>
</dbReference>
<dbReference type="GO" id="GO:0005524">
    <property type="term" value="F:ATP binding"/>
    <property type="evidence" value="ECO:0007669"/>
    <property type="project" value="UniProtKB-UniRule"/>
</dbReference>
<dbReference type="GO" id="GO:0046872">
    <property type="term" value="F:metal ion binding"/>
    <property type="evidence" value="ECO:0007669"/>
    <property type="project" value="UniProtKB-KW"/>
</dbReference>
<dbReference type="GO" id="GO:0004612">
    <property type="term" value="F:phosphoenolpyruvate carboxykinase (ATP) activity"/>
    <property type="evidence" value="ECO:0007669"/>
    <property type="project" value="UniProtKB-UniRule"/>
</dbReference>
<dbReference type="GO" id="GO:0006094">
    <property type="term" value="P:gluconeogenesis"/>
    <property type="evidence" value="ECO:0007669"/>
    <property type="project" value="UniProtKB-UniRule"/>
</dbReference>
<dbReference type="CDD" id="cd00484">
    <property type="entry name" value="PEPCK_ATP"/>
    <property type="match status" value="1"/>
</dbReference>
<dbReference type="FunFam" id="2.170.8.10:FF:000001">
    <property type="entry name" value="Phosphoenolpyruvate carboxykinase (ATP)"/>
    <property type="match status" value="1"/>
</dbReference>
<dbReference type="Gene3D" id="3.90.228.20">
    <property type="match status" value="1"/>
</dbReference>
<dbReference type="Gene3D" id="3.40.449.10">
    <property type="entry name" value="Phosphoenolpyruvate Carboxykinase, domain 1"/>
    <property type="match status" value="1"/>
</dbReference>
<dbReference type="Gene3D" id="2.170.8.10">
    <property type="entry name" value="Phosphoenolpyruvate Carboxykinase, domain 2"/>
    <property type="match status" value="1"/>
</dbReference>
<dbReference type="HAMAP" id="MF_00453">
    <property type="entry name" value="PEPCK_ATP"/>
    <property type="match status" value="1"/>
</dbReference>
<dbReference type="InterPro" id="IPR001272">
    <property type="entry name" value="PEP_carboxykinase_ATP"/>
</dbReference>
<dbReference type="InterPro" id="IPR013035">
    <property type="entry name" value="PEP_carboxykinase_C"/>
</dbReference>
<dbReference type="InterPro" id="IPR008210">
    <property type="entry name" value="PEP_carboxykinase_N"/>
</dbReference>
<dbReference type="InterPro" id="IPR015994">
    <property type="entry name" value="PEPCK_ATP_CS"/>
</dbReference>
<dbReference type="NCBIfam" id="TIGR00224">
    <property type="entry name" value="pckA"/>
    <property type="match status" value="1"/>
</dbReference>
<dbReference type="NCBIfam" id="NF006820">
    <property type="entry name" value="PRK09344.1-2"/>
    <property type="match status" value="1"/>
</dbReference>
<dbReference type="NCBIfam" id="NF006821">
    <property type="entry name" value="PRK09344.1-3"/>
    <property type="match status" value="1"/>
</dbReference>
<dbReference type="NCBIfam" id="NF006822">
    <property type="entry name" value="PRK09344.1-4"/>
    <property type="match status" value="1"/>
</dbReference>
<dbReference type="PANTHER" id="PTHR30031:SF0">
    <property type="entry name" value="PHOSPHOENOLPYRUVATE CARBOXYKINASE (ATP)"/>
    <property type="match status" value="1"/>
</dbReference>
<dbReference type="PANTHER" id="PTHR30031">
    <property type="entry name" value="PHOSPHOENOLPYRUVATE CARBOXYKINASE ATP"/>
    <property type="match status" value="1"/>
</dbReference>
<dbReference type="Pfam" id="PF01293">
    <property type="entry name" value="PEPCK_ATP"/>
    <property type="match status" value="1"/>
</dbReference>
<dbReference type="PIRSF" id="PIRSF006294">
    <property type="entry name" value="PEP_crbxkin"/>
    <property type="match status" value="1"/>
</dbReference>
<dbReference type="SUPFAM" id="SSF68923">
    <property type="entry name" value="PEP carboxykinase N-terminal domain"/>
    <property type="match status" value="1"/>
</dbReference>
<dbReference type="SUPFAM" id="SSF53795">
    <property type="entry name" value="PEP carboxykinase-like"/>
    <property type="match status" value="1"/>
</dbReference>
<dbReference type="PROSITE" id="PS00532">
    <property type="entry name" value="PEPCK_ATP"/>
    <property type="match status" value="1"/>
</dbReference>